<evidence type="ECO:0000255" key="1">
    <source>
        <dbReference type="HAMAP-Rule" id="MF_01683"/>
    </source>
</evidence>
<comment type="function">
    <text evidence="1">Catalyzes the phosphorylation of methylthioribose into methylthioribose-1-phosphate.</text>
</comment>
<comment type="catalytic activity">
    <reaction evidence="1">
        <text>5-(methylsulfanyl)-D-ribose + ATP = 5-(methylsulfanyl)-alpha-D-ribose 1-phosphate + ADP + H(+)</text>
        <dbReference type="Rhea" id="RHEA:22312"/>
        <dbReference type="ChEBI" id="CHEBI:15378"/>
        <dbReference type="ChEBI" id="CHEBI:30616"/>
        <dbReference type="ChEBI" id="CHEBI:58533"/>
        <dbReference type="ChEBI" id="CHEBI:78440"/>
        <dbReference type="ChEBI" id="CHEBI:456216"/>
        <dbReference type="EC" id="2.7.1.100"/>
    </reaction>
</comment>
<comment type="pathway">
    <text evidence="1">Amino-acid biosynthesis; L-methionine biosynthesis via salvage pathway; S-methyl-5-thio-alpha-D-ribose 1-phosphate from S-methyl-5'-thioadenosine (hydrolase route): step 2/2.</text>
</comment>
<comment type="subunit">
    <text evidence="1">Homodimer.</text>
</comment>
<comment type="similarity">
    <text evidence="1">Belongs to the methylthioribose kinase family.</text>
</comment>
<keyword id="KW-0028">Amino-acid biosynthesis</keyword>
<keyword id="KW-0067">ATP-binding</keyword>
<keyword id="KW-0418">Kinase</keyword>
<keyword id="KW-0486">Methionine biosynthesis</keyword>
<keyword id="KW-0547">Nucleotide-binding</keyword>
<keyword id="KW-0808">Transferase</keyword>
<reference key="1">
    <citation type="journal article" date="2004" name="Proc. Natl. Acad. Sci. U.S.A.">
        <title>Insights into the evolution of Yersinia pestis through whole-genome comparison with Yersinia pseudotuberculosis.</title>
        <authorList>
            <person name="Chain P.S.G."/>
            <person name="Carniel E."/>
            <person name="Larimer F.W."/>
            <person name="Lamerdin J."/>
            <person name="Stoutland P.O."/>
            <person name="Regala W.M."/>
            <person name="Georgescu A.M."/>
            <person name="Vergez L.M."/>
            <person name="Land M.L."/>
            <person name="Motin V.L."/>
            <person name="Brubaker R.R."/>
            <person name="Fowler J."/>
            <person name="Hinnebusch J."/>
            <person name="Marceau M."/>
            <person name="Medigue C."/>
            <person name="Simonet M."/>
            <person name="Chenal-Francisque V."/>
            <person name="Souza B."/>
            <person name="Dacheux D."/>
            <person name="Elliott J.M."/>
            <person name="Derbise A."/>
            <person name="Hauser L.J."/>
            <person name="Garcia E."/>
        </authorList>
    </citation>
    <scope>NUCLEOTIDE SEQUENCE [LARGE SCALE GENOMIC DNA]</scope>
    <source>
        <strain>IP32953</strain>
    </source>
</reference>
<dbReference type="EC" id="2.7.1.100" evidence="1"/>
<dbReference type="EMBL" id="BX936398">
    <property type="protein sequence ID" value="CAH20118.1"/>
    <property type="molecule type" value="Genomic_DNA"/>
</dbReference>
<dbReference type="RefSeq" id="WP_011191835.1">
    <property type="nucleotide sequence ID" value="NC_006155.1"/>
</dbReference>
<dbReference type="SMR" id="Q66E15"/>
<dbReference type="KEGG" id="ypo:BZ17_1668"/>
<dbReference type="KEGG" id="yps:YPTB0878"/>
<dbReference type="PATRIC" id="fig|273123.14.peg.1776"/>
<dbReference type="UniPathway" id="UPA00904">
    <property type="reaction ID" value="UER00872"/>
</dbReference>
<dbReference type="Proteomes" id="UP000001011">
    <property type="component" value="Chromosome"/>
</dbReference>
<dbReference type="GO" id="GO:0005524">
    <property type="term" value="F:ATP binding"/>
    <property type="evidence" value="ECO:0007669"/>
    <property type="project" value="UniProtKB-UniRule"/>
</dbReference>
<dbReference type="GO" id="GO:0046522">
    <property type="term" value="F:S-methyl-5-thioribose kinase activity"/>
    <property type="evidence" value="ECO:0007669"/>
    <property type="project" value="UniProtKB-UniRule"/>
</dbReference>
<dbReference type="GO" id="GO:0019509">
    <property type="term" value="P:L-methionine salvage from methylthioadenosine"/>
    <property type="evidence" value="ECO:0007669"/>
    <property type="project" value="UniProtKB-UniRule"/>
</dbReference>
<dbReference type="Gene3D" id="3.90.1200.10">
    <property type="match status" value="1"/>
</dbReference>
<dbReference type="Gene3D" id="3.30.200.20">
    <property type="entry name" value="Phosphorylase Kinase, domain 1"/>
    <property type="match status" value="1"/>
</dbReference>
<dbReference type="HAMAP" id="MF_01683">
    <property type="entry name" value="Salvage_MtnK"/>
    <property type="match status" value="1"/>
</dbReference>
<dbReference type="InterPro" id="IPR002575">
    <property type="entry name" value="Aminoglycoside_PTrfase"/>
</dbReference>
<dbReference type="InterPro" id="IPR011009">
    <property type="entry name" value="Kinase-like_dom_sf"/>
</dbReference>
<dbReference type="InterPro" id="IPR009212">
    <property type="entry name" value="Methylthioribose_kinase"/>
</dbReference>
<dbReference type="NCBIfam" id="TIGR01767">
    <property type="entry name" value="MTRK"/>
    <property type="match status" value="1"/>
</dbReference>
<dbReference type="PANTHER" id="PTHR34273">
    <property type="entry name" value="METHYLTHIORIBOSE KINASE"/>
    <property type="match status" value="1"/>
</dbReference>
<dbReference type="PANTHER" id="PTHR34273:SF2">
    <property type="entry name" value="METHYLTHIORIBOSE KINASE"/>
    <property type="match status" value="1"/>
</dbReference>
<dbReference type="Pfam" id="PF01636">
    <property type="entry name" value="APH"/>
    <property type="match status" value="1"/>
</dbReference>
<dbReference type="PIRSF" id="PIRSF031134">
    <property type="entry name" value="MTRK"/>
    <property type="match status" value="1"/>
</dbReference>
<dbReference type="SUPFAM" id="SSF56112">
    <property type="entry name" value="Protein kinase-like (PK-like)"/>
    <property type="match status" value="1"/>
</dbReference>
<feature type="chain" id="PRO_0000357352" description="Methylthioribose kinase">
    <location>
        <begin position="1"/>
        <end position="407"/>
    </location>
</feature>
<feature type="binding site" evidence="1">
    <location>
        <position position="40"/>
    </location>
    <ligand>
        <name>ATP</name>
        <dbReference type="ChEBI" id="CHEBI:30616"/>
    </ligand>
</feature>
<feature type="binding site" evidence="1">
    <location>
        <position position="57"/>
    </location>
    <ligand>
        <name>ATP</name>
        <dbReference type="ChEBI" id="CHEBI:30616"/>
    </ligand>
</feature>
<feature type="binding site" evidence="1">
    <location>
        <begin position="111"/>
        <end position="113"/>
    </location>
    <ligand>
        <name>ATP</name>
        <dbReference type="ChEBI" id="CHEBI:30616"/>
    </ligand>
</feature>
<feature type="binding site" evidence="1">
    <location>
        <position position="229"/>
    </location>
    <ligand>
        <name>substrate</name>
    </ligand>
</feature>
<feature type="binding site" evidence="1">
    <location>
        <begin position="246"/>
        <end position="248"/>
    </location>
    <ligand>
        <name>ATP</name>
        <dbReference type="ChEBI" id="CHEBI:30616"/>
    </ligand>
</feature>
<feature type="binding site" evidence="1">
    <location>
        <position position="344"/>
    </location>
    <ligand>
        <name>substrate</name>
    </ligand>
</feature>
<proteinExistence type="inferred from homology"/>
<gene>
    <name evidence="1" type="primary">mtnK</name>
    <name type="ordered locus">YPTB0878</name>
</gene>
<protein>
    <recommendedName>
        <fullName evidence="1">Methylthioribose kinase</fullName>
        <shortName evidence="1">MTR kinase</shortName>
        <ecNumber evidence="1">2.7.1.100</ecNumber>
    </recommendedName>
</protein>
<organism>
    <name type="scientific">Yersinia pseudotuberculosis serotype I (strain IP32953)</name>
    <dbReference type="NCBI Taxonomy" id="273123"/>
    <lineage>
        <taxon>Bacteria</taxon>
        <taxon>Pseudomonadati</taxon>
        <taxon>Pseudomonadota</taxon>
        <taxon>Gammaproteobacteria</taxon>
        <taxon>Enterobacterales</taxon>
        <taxon>Yersiniaceae</taxon>
        <taxon>Yersinia</taxon>
    </lineage>
</organism>
<sequence>MSRYHTFTAADAVEYARQFGQVADPQALVTADEIGDGNLNLVFKIRDTAGISRVIVKQALPYVRCVGESWPLTLDRARIEAETLLTHSQFCPQHTVKVLHHDAELAVMVQEDLSDHHIWRHELIQGNYYPQAAEQLGEYLAQTLFHTSDFYQSAQAKKAAVSRYTNPELCQITEDLFFTDPYIDHERNNFDPVLLPEVLSLRQDKALKLAVASLKHRFLSQAEALLHGDIHSGSIFVADGRLKTIDAEFGFYGPIGFDIGTALGNLLLNYCGLPGLAGPRDAAAGREQRLKDVQTVWQTFAARFLALSQEKTQDPALATEGYATQFLQHVWRDAIGYCGSELIRRTIGLAHVADLDSIDDEEMRRACQRHALSLGRALILVAPHVDDVGGVVARIRQSPSSLTPQRC</sequence>
<accession>Q66E15</accession>
<name>MTNK_YERPS</name>